<organism>
    <name type="scientific">Bacillus cereus (strain Q1)</name>
    <dbReference type="NCBI Taxonomy" id="361100"/>
    <lineage>
        <taxon>Bacteria</taxon>
        <taxon>Bacillati</taxon>
        <taxon>Bacillota</taxon>
        <taxon>Bacilli</taxon>
        <taxon>Bacillales</taxon>
        <taxon>Bacillaceae</taxon>
        <taxon>Bacillus</taxon>
        <taxon>Bacillus cereus group</taxon>
    </lineage>
</organism>
<sequence>MSIFIGGAWPYANGSLHLGHIASLLPGDILARYYRAKGENVLYVSGSDCNGTPIAIRAKQEGVTAKDIADQYHEEFERCFRNLGFTYDCYTRTDSEHHHETVQNVFLRLLEEGHIYKKTVEQAYCETCTQFLPDRYVEGICPHCHEAARGDQCDACSAILDPLDLLEKKCKLCGSTPSVQETEHFYFALHTFQEQIKTAVENVKQTGTWRDNAIQLTERYVKEGLQDRAVSRDLPIGVPIPVEGYEDKKIYVWIEAVTGYYSASKHWAEKTGEDDQEFWDSEAKTYYVHGKDNIPFHSVIWPAVLLGIGEGAIPRHIVSNEYLTVEKRKLSTSKNWAVWVPDILERYDPDSIRYFLTVNAPENRDTDFSWREFIYSHNSELLGAYGNFVNRTLKFIEKYYGGIVPKGSIDVELKDKVEGLYKHVGEAIEQTKFKVALESIFDAVRFANKYFDEKQPWKQREDNPVSCEETIYNCVYLIANFVNLLEPFLPFSSERIRNTLSIVNRNWESQHTLPSRIDSVQPLFERIDVKQIEHEVEKLYGAVK</sequence>
<gene>
    <name evidence="1" type="primary">metG</name>
    <name type="ordered locus">BCQ_4856</name>
</gene>
<accession>B9J4E0</accession>
<reference key="1">
    <citation type="journal article" date="2009" name="J. Bacteriol.">
        <title>Complete genome sequence of the extremophilic Bacillus cereus strain Q1 with industrial applications.</title>
        <authorList>
            <person name="Xiong Z."/>
            <person name="Jiang Y."/>
            <person name="Qi D."/>
            <person name="Lu H."/>
            <person name="Yang F."/>
            <person name="Yang J."/>
            <person name="Chen L."/>
            <person name="Sun L."/>
            <person name="Xu X."/>
            <person name="Xue Y."/>
            <person name="Zhu Y."/>
            <person name="Jin Q."/>
        </authorList>
    </citation>
    <scope>NUCLEOTIDE SEQUENCE [LARGE SCALE GENOMIC DNA]</scope>
    <source>
        <strain>Q1</strain>
    </source>
</reference>
<evidence type="ECO:0000255" key="1">
    <source>
        <dbReference type="HAMAP-Rule" id="MF_00098"/>
    </source>
</evidence>
<feature type="chain" id="PRO_1000199277" description="Methionine--tRNA ligase">
    <location>
        <begin position="1"/>
        <end position="544"/>
    </location>
</feature>
<feature type="short sequence motif" description="'HIGH' region">
    <location>
        <begin position="10"/>
        <end position="20"/>
    </location>
</feature>
<feature type="short sequence motif" description="'KMSKS' region">
    <location>
        <begin position="329"/>
        <end position="333"/>
    </location>
</feature>
<feature type="binding site" evidence="1">
    <location>
        <position position="141"/>
    </location>
    <ligand>
        <name>Zn(2+)</name>
        <dbReference type="ChEBI" id="CHEBI:29105"/>
    </ligand>
</feature>
<feature type="binding site" evidence="1">
    <location>
        <position position="144"/>
    </location>
    <ligand>
        <name>Zn(2+)</name>
        <dbReference type="ChEBI" id="CHEBI:29105"/>
    </ligand>
</feature>
<feature type="binding site" evidence="1">
    <location>
        <position position="153"/>
    </location>
    <ligand>
        <name>Zn(2+)</name>
        <dbReference type="ChEBI" id="CHEBI:29105"/>
    </ligand>
</feature>
<feature type="binding site" evidence="1">
    <location>
        <position position="156"/>
    </location>
    <ligand>
        <name>Zn(2+)</name>
        <dbReference type="ChEBI" id="CHEBI:29105"/>
    </ligand>
</feature>
<feature type="binding site" evidence="1">
    <location>
        <position position="332"/>
    </location>
    <ligand>
        <name>ATP</name>
        <dbReference type="ChEBI" id="CHEBI:30616"/>
    </ligand>
</feature>
<proteinExistence type="inferred from homology"/>
<keyword id="KW-0030">Aminoacyl-tRNA synthetase</keyword>
<keyword id="KW-0067">ATP-binding</keyword>
<keyword id="KW-0963">Cytoplasm</keyword>
<keyword id="KW-0436">Ligase</keyword>
<keyword id="KW-0479">Metal-binding</keyword>
<keyword id="KW-0547">Nucleotide-binding</keyword>
<keyword id="KW-0648">Protein biosynthesis</keyword>
<keyword id="KW-0862">Zinc</keyword>
<protein>
    <recommendedName>
        <fullName evidence="1">Methionine--tRNA ligase</fullName>
        <ecNumber evidence="1">6.1.1.10</ecNumber>
    </recommendedName>
    <alternativeName>
        <fullName evidence="1">Methionyl-tRNA synthetase</fullName>
        <shortName evidence="1">MetRS</shortName>
    </alternativeName>
</protein>
<dbReference type="EC" id="6.1.1.10" evidence="1"/>
<dbReference type="EMBL" id="CP000227">
    <property type="protein sequence ID" value="ACM15257.1"/>
    <property type="molecule type" value="Genomic_DNA"/>
</dbReference>
<dbReference type="SMR" id="B9J4E0"/>
<dbReference type="KEGG" id="bcq:BCQ_4856"/>
<dbReference type="HOGENOM" id="CLU_009710_1_2_9"/>
<dbReference type="Proteomes" id="UP000000441">
    <property type="component" value="Chromosome"/>
</dbReference>
<dbReference type="GO" id="GO:0005829">
    <property type="term" value="C:cytosol"/>
    <property type="evidence" value="ECO:0007669"/>
    <property type="project" value="TreeGrafter"/>
</dbReference>
<dbReference type="GO" id="GO:0005524">
    <property type="term" value="F:ATP binding"/>
    <property type="evidence" value="ECO:0007669"/>
    <property type="project" value="UniProtKB-UniRule"/>
</dbReference>
<dbReference type="GO" id="GO:0046872">
    <property type="term" value="F:metal ion binding"/>
    <property type="evidence" value="ECO:0007669"/>
    <property type="project" value="UniProtKB-KW"/>
</dbReference>
<dbReference type="GO" id="GO:0004825">
    <property type="term" value="F:methionine-tRNA ligase activity"/>
    <property type="evidence" value="ECO:0007669"/>
    <property type="project" value="UniProtKB-UniRule"/>
</dbReference>
<dbReference type="GO" id="GO:0006431">
    <property type="term" value="P:methionyl-tRNA aminoacylation"/>
    <property type="evidence" value="ECO:0007669"/>
    <property type="project" value="UniProtKB-UniRule"/>
</dbReference>
<dbReference type="CDD" id="cd07957">
    <property type="entry name" value="Anticodon_Ia_Met"/>
    <property type="match status" value="1"/>
</dbReference>
<dbReference type="CDD" id="cd00814">
    <property type="entry name" value="MetRS_core"/>
    <property type="match status" value="1"/>
</dbReference>
<dbReference type="FunFam" id="1.10.730.10:FF:000041">
    <property type="entry name" value="Methionine--tRNA ligase"/>
    <property type="match status" value="1"/>
</dbReference>
<dbReference type="FunFam" id="2.20.28.20:FF:000001">
    <property type="entry name" value="Methionine--tRNA ligase"/>
    <property type="match status" value="1"/>
</dbReference>
<dbReference type="Gene3D" id="3.40.50.620">
    <property type="entry name" value="HUPs"/>
    <property type="match status" value="1"/>
</dbReference>
<dbReference type="Gene3D" id="1.10.730.10">
    <property type="entry name" value="Isoleucyl-tRNA Synthetase, Domain 1"/>
    <property type="match status" value="1"/>
</dbReference>
<dbReference type="Gene3D" id="2.20.28.20">
    <property type="entry name" value="Methionyl-tRNA synthetase, Zn-domain"/>
    <property type="match status" value="1"/>
</dbReference>
<dbReference type="HAMAP" id="MF_00098">
    <property type="entry name" value="Met_tRNA_synth_type1"/>
    <property type="match status" value="1"/>
</dbReference>
<dbReference type="InterPro" id="IPR001412">
    <property type="entry name" value="aa-tRNA-synth_I_CS"/>
</dbReference>
<dbReference type="InterPro" id="IPR041872">
    <property type="entry name" value="Anticodon_Met"/>
</dbReference>
<dbReference type="InterPro" id="IPR013155">
    <property type="entry name" value="M/V/L/I-tRNA-synth_anticd-bd"/>
</dbReference>
<dbReference type="InterPro" id="IPR023458">
    <property type="entry name" value="Met-tRNA_ligase_1"/>
</dbReference>
<dbReference type="InterPro" id="IPR014758">
    <property type="entry name" value="Met-tRNA_synth"/>
</dbReference>
<dbReference type="InterPro" id="IPR015413">
    <property type="entry name" value="Methionyl/Leucyl_tRNA_Synth"/>
</dbReference>
<dbReference type="InterPro" id="IPR033911">
    <property type="entry name" value="MetRS_core"/>
</dbReference>
<dbReference type="InterPro" id="IPR029038">
    <property type="entry name" value="MetRS_Zn"/>
</dbReference>
<dbReference type="InterPro" id="IPR014729">
    <property type="entry name" value="Rossmann-like_a/b/a_fold"/>
</dbReference>
<dbReference type="InterPro" id="IPR009080">
    <property type="entry name" value="tRNAsynth_Ia_anticodon-bd"/>
</dbReference>
<dbReference type="NCBIfam" id="TIGR00398">
    <property type="entry name" value="metG"/>
    <property type="match status" value="1"/>
</dbReference>
<dbReference type="NCBIfam" id="NF001100">
    <property type="entry name" value="PRK00133.1"/>
    <property type="match status" value="1"/>
</dbReference>
<dbReference type="PANTHER" id="PTHR45765">
    <property type="entry name" value="METHIONINE--TRNA LIGASE"/>
    <property type="match status" value="1"/>
</dbReference>
<dbReference type="PANTHER" id="PTHR45765:SF1">
    <property type="entry name" value="METHIONINE--TRNA LIGASE, CYTOPLASMIC"/>
    <property type="match status" value="1"/>
</dbReference>
<dbReference type="Pfam" id="PF08264">
    <property type="entry name" value="Anticodon_1"/>
    <property type="match status" value="1"/>
</dbReference>
<dbReference type="Pfam" id="PF09334">
    <property type="entry name" value="tRNA-synt_1g"/>
    <property type="match status" value="1"/>
</dbReference>
<dbReference type="PRINTS" id="PR01041">
    <property type="entry name" value="TRNASYNTHMET"/>
</dbReference>
<dbReference type="SUPFAM" id="SSF47323">
    <property type="entry name" value="Anticodon-binding domain of a subclass of class I aminoacyl-tRNA synthetases"/>
    <property type="match status" value="1"/>
</dbReference>
<dbReference type="SUPFAM" id="SSF57770">
    <property type="entry name" value="Methionyl-tRNA synthetase (MetRS), Zn-domain"/>
    <property type="match status" value="1"/>
</dbReference>
<dbReference type="SUPFAM" id="SSF52374">
    <property type="entry name" value="Nucleotidylyl transferase"/>
    <property type="match status" value="1"/>
</dbReference>
<dbReference type="PROSITE" id="PS00178">
    <property type="entry name" value="AA_TRNA_LIGASE_I"/>
    <property type="match status" value="1"/>
</dbReference>
<name>SYM_BACCQ</name>
<comment type="function">
    <text evidence="1">Is required not only for elongation of protein synthesis but also for the initiation of all mRNA translation through initiator tRNA(fMet) aminoacylation.</text>
</comment>
<comment type="catalytic activity">
    <reaction evidence="1">
        <text>tRNA(Met) + L-methionine + ATP = L-methionyl-tRNA(Met) + AMP + diphosphate</text>
        <dbReference type="Rhea" id="RHEA:13481"/>
        <dbReference type="Rhea" id="RHEA-COMP:9667"/>
        <dbReference type="Rhea" id="RHEA-COMP:9698"/>
        <dbReference type="ChEBI" id="CHEBI:30616"/>
        <dbReference type="ChEBI" id="CHEBI:33019"/>
        <dbReference type="ChEBI" id="CHEBI:57844"/>
        <dbReference type="ChEBI" id="CHEBI:78442"/>
        <dbReference type="ChEBI" id="CHEBI:78530"/>
        <dbReference type="ChEBI" id="CHEBI:456215"/>
        <dbReference type="EC" id="6.1.1.10"/>
    </reaction>
</comment>
<comment type="cofactor">
    <cofactor evidence="1">
        <name>Zn(2+)</name>
        <dbReference type="ChEBI" id="CHEBI:29105"/>
    </cofactor>
    <text evidence="1">Binds 1 zinc ion per subunit.</text>
</comment>
<comment type="subunit">
    <text evidence="1">Monomer.</text>
</comment>
<comment type="subcellular location">
    <subcellularLocation>
        <location evidence="1">Cytoplasm</location>
    </subcellularLocation>
</comment>
<comment type="similarity">
    <text evidence="1">Belongs to the class-I aminoacyl-tRNA synthetase family. MetG type 1 subfamily.</text>
</comment>